<protein>
    <recommendedName>
        <fullName evidence="1">Tetraacyldisaccharide 4'-kinase</fullName>
        <ecNumber evidence="1">2.7.1.130</ecNumber>
    </recommendedName>
    <alternativeName>
        <fullName evidence="1">Lipid A 4'-kinase</fullName>
    </alternativeName>
</protein>
<keyword id="KW-0067">ATP-binding</keyword>
<keyword id="KW-0418">Kinase</keyword>
<keyword id="KW-0441">Lipid A biosynthesis</keyword>
<keyword id="KW-0444">Lipid biosynthesis</keyword>
<keyword id="KW-0443">Lipid metabolism</keyword>
<keyword id="KW-0547">Nucleotide-binding</keyword>
<keyword id="KW-0808">Transferase</keyword>
<sequence>MIERIWSGQSRLYLLLLPLSWLYGAVTWLIRASYRLGLRSAWRSPVPVIIVGNLTAGGNGKTPVVIWLVEQLQQRGYRVGVVSRGYGGKSAVYPLLLSDNTTTAQAGDEPVLIFQRTGAPVAVSPKRADAIKALLQSHAVDFIITDDGLQHYALQRDFELVVIDGVRRFGNGWWLPAGPMREREGRLRSVDAAITNGGLAAEGEIPMQLVAREAVNLVTGQRQPAEQLQHVVAMAGIGHPPRFFATLNLLGIKPENEHAFADHQDYSLAQLSRLTSGPQILLMTEKDAVKCRAFALPNWWYLPVDAQLPSDRADKLLLNIQALSPDTK</sequence>
<gene>
    <name evidence="1" type="primary">lpxK</name>
    <name type="ordered locus">YPK_2664</name>
</gene>
<feature type="chain" id="PRO_1000123757" description="Tetraacyldisaccharide 4'-kinase">
    <location>
        <begin position="1"/>
        <end position="328"/>
    </location>
</feature>
<feature type="binding site" evidence="1">
    <location>
        <begin position="55"/>
        <end position="62"/>
    </location>
    <ligand>
        <name>ATP</name>
        <dbReference type="ChEBI" id="CHEBI:30616"/>
    </ligand>
</feature>
<organism>
    <name type="scientific">Yersinia pseudotuberculosis serotype O:3 (strain YPIII)</name>
    <dbReference type="NCBI Taxonomy" id="502800"/>
    <lineage>
        <taxon>Bacteria</taxon>
        <taxon>Pseudomonadati</taxon>
        <taxon>Pseudomonadota</taxon>
        <taxon>Gammaproteobacteria</taxon>
        <taxon>Enterobacterales</taxon>
        <taxon>Yersiniaceae</taxon>
        <taxon>Yersinia</taxon>
    </lineage>
</organism>
<proteinExistence type="inferred from homology"/>
<name>LPXK_YERPY</name>
<comment type="function">
    <text evidence="1">Transfers the gamma-phosphate of ATP to the 4'-position of a tetraacyldisaccharide 1-phosphate intermediate (termed DS-1-P) to form tetraacyldisaccharide 1,4'-bis-phosphate (lipid IVA).</text>
</comment>
<comment type="catalytic activity">
    <reaction evidence="1">
        <text>a lipid A disaccharide + ATP = a lipid IVA + ADP + H(+)</text>
        <dbReference type="Rhea" id="RHEA:67840"/>
        <dbReference type="ChEBI" id="CHEBI:15378"/>
        <dbReference type="ChEBI" id="CHEBI:30616"/>
        <dbReference type="ChEBI" id="CHEBI:176343"/>
        <dbReference type="ChEBI" id="CHEBI:176425"/>
        <dbReference type="ChEBI" id="CHEBI:456216"/>
        <dbReference type="EC" id="2.7.1.130"/>
    </reaction>
</comment>
<comment type="pathway">
    <text evidence="1">Glycolipid biosynthesis; lipid IV(A) biosynthesis; lipid IV(A) from (3R)-3-hydroxytetradecanoyl-[acyl-carrier-protein] and UDP-N-acetyl-alpha-D-glucosamine: step 6/6.</text>
</comment>
<comment type="similarity">
    <text evidence="1">Belongs to the LpxK family.</text>
</comment>
<dbReference type="EC" id="2.7.1.130" evidence="1"/>
<dbReference type="EMBL" id="CP000950">
    <property type="protein sequence ID" value="ACA68941.1"/>
    <property type="molecule type" value="Genomic_DNA"/>
</dbReference>
<dbReference type="RefSeq" id="WP_002211319.1">
    <property type="nucleotide sequence ID" value="NZ_CP009792.1"/>
</dbReference>
<dbReference type="SMR" id="B1JRD3"/>
<dbReference type="GeneID" id="57977192"/>
<dbReference type="KEGG" id="ypy:YPK_2664"/>
<dbReference type="PATRIC" id="fig|502800.11.peg.3364"/>
<dbReference type="UniPathway" id="UPA00359">
    <property type="reaction ID" value="UER00482"/>
</dbReference>
<dbReference type="GO" id="GO:0005886">
    <property type="term" value="C:plasma membrane"/>
    <property type="evidence" value="ECO:0007669"/>
    <property type="project" value="TreeGrafter"/>
</dbReference>
<dbReference type="GO" id="GO:0005524">
    <property type="term" value="F:ATP binding"/>
    <property type="evidence" value="ECO:0007669"/>
    <property type="project" value="UniProtKB-UniRule"/>
</dbReference>
<dbReference type="GO" id="GO:0009029">
    <property type="term" value="F:tetraacyldisaccharide 4'-kinase activity"/>
    <property type="evidence" value="ECO:0007669"/>
    <property type="project" value="UniProtKB-UniRule"/>
</dbReference>
<dbReference type="GO" id="GO:0009245">
    <property type="term" value="P:lipid A biosynthetic process"/>
    <property type="evidence" value="ECO:0007669"/>
    <property type="project" value="UniProtKB-UniRule"/>
</dbReference>
<dbReference type="GO" id="GO:0009244">
    <property type="term" value="P:lipopolysaccharide core region biosynthetic process"/>
    <property type="evidence" value="ECO:0007669"/>
    <property type="project" value="TreeGrafter"/>
</dbReference>
<dbReference type="Gene3D" id="3.40.50.300">
    <property type="entry name" value="P-loop containing nucleotide triphosphate hydrolases"/>
    <property type="match status" value="1"/>
</dbReference>
<dbReference type="HAMAP" id="MF_00409">
    <property type="entry name" value="LpxK"/>
    <property type="match status" value="1"/>
</dbReference>
<dbReference type="InterPro" id="IPR003758">
    <property type="entry name" value="LpxK"/>
</dbReference>
<dbReference type="InterPro" id="IPR027417">
    <property type="entry name" value="P-loop_NTPase"/>
</dbReference>
<dbReference type="NCBIfam" id="TIGR00682">
    <property type="entry name" value="lpxK"/>
    <property type="match status" value="1"/>
</dbReference>
<dbReference type="PANTHER" id="PTHR42724">
    <property type="entry name" value="TETRAACYLDISACCHARIDE 4'-KINASE"/>
    <property type="match status" value="1"/>
</dbReference>
<dbReference type="PANTHER" id="PTHR42724:SF1">
    <property type="entry name" value="TETRAACYLDISACCHARIDE 4'-KINASE, MITOCHONDRIAL-RELATED"/>
    <property type="match status" value="1"/>
</dbReference>
<dbReference type="Pfam" id="PF02606">
    <property type="entry name" value="LpxK"/>
    <property type="match status" value="1"/>
</dbReference>
<dbReference type="SUPFAM" id="SSF52540">
    <property type="entry name" value="P-loop containing nucleoside triphosphate hydrolases"/>
    <property type="match status" value="1"/>
</dbReference>
<reference key="1">
    <citation type="submission" date="2008-02" db="EMBL/GenBank/DDBJ databases">
        <title>Complete sequence of Yersinia pseudotuberculosis YPIII.</title>
        <authorList>
            <consortium name="US DOE Joint Genome Institute"/>
            <person name="Copeland A."/>
            <person name="Lucas S."/>
            <person name="Lapidus A."/>
            <person name="Glavina del Rio T."/>
            <person name="Dalin E."/>
            <person name="Tice H."/>
            <person name="Bruce D."/>
            <person name="Goodwin L."/>
            <person name="Pitluck S."/>
            <person name="Munk A.C."/>
            <person name="Brettin T."/>
            <person name="Detter J.C."/>
            <person name="Han C."/>
            <person name="Tapia R."/>
            <person name="Schmutz J."/>
            <person name="Larimer F."/>
            <person name="Land M."/>
            <person name="Hauser L."/>
            <person name="Challacombe J.F."/>
            <person name="Green L."/>
            <person name="Lindler L.E."/>
            <person name="Nikolich M.P."/>
            <person name="Richardson P."/>
        </authorList>
    </citation>
    <scope>NUCLEOTIDE SEQUENCE [LARGE SCALE GENOMIC DNA]</scope>
    <source>
        <strain>YPIII</strain>
    </source>
</reference>
<evidence type="ECO:0000255" key="1">
    <source>
        <dbReference type="HAMAP-Rule" id="MF_00409"/>
    </source>
</evidence>
<accession>B1JRD3</accession>